<name>STMC_ASPUT</name>
<comment type="function">
    <text evidence="3">UDP-glycosyltransferase; part of the gene cluster that mediates the biosynthesis of stromemycin, a depside C-glucoside with two unsaturated C9 side chains belonging to aromatic polyketide glycosides (PubMed:38545685). Acts as the tailoring enzyme responsible for 3-C-glucosylation of bininalkenylresorcylic acid produced by the combined action of the HR-PKS stmA and the NR-PKS stmB to yield stromemycin (PubMed:38545685). Possesses a relatively strict acceptor specificity towards bininalkenylresorcylic acid for C-glycosylation, but is able to use several donors including UDP-alpha-D-galactose, UDP-alpha-D-xylose, UDP-alpha-D-4-keto-6-deoxyglucose, UDP-alpha-D-quinovose, and UDP-beta-L-rhamnose (PubMed:38545685).</text>
</comment>
<comment type="catalytic activity">
    <reaction evidence="3">
        <text>stromemycin aglycone + UDP-alpha-D-glucose = stromemycin + UDP + H(+)</text>
        <dbReference type="Rhea" id="RHEA:81995"/>
        <dbReference type="ChEBI" id="CHEBI:15378"/>
        <dbReference type="ChEBI" id="CHEBI:58223"/>
        <dbReference type="ChEBI" id="CHEBI:58885"/>
        <dbReference type="ChEBI" id="CHEBI:231925"/>
        <dbReference type="ChEBI" id="CHEBI:231926"/>
    </reaction>
    <physiologicalReaction direction="left-to-right" evidence="3">
        <dbReference type="Rhea" id="RHEA:81996"/>
    </physiologicalReaction>
</comment>
<comment type="catalytic activity">
    <reaction evidence="3">
        <text>exophillate aglycone + UDP-alpha-D-glucose = exophillate + UDP + H(+)</text>
        <dbReference type="Rhea" id="RHEA:82179"/>
        <dbReference type="ChEBI" id="CHEBI:15378"/>
        <dbReference type="ChEBI" id="CHEBI:58223"/>
        <dbReference type="ChEBI" id="CHEBI:58885"/>
        <dbReference type="ChEBI" id="CHEBI:232028"/>
        <dbReference type="ChEBI" id="CHEBI:232029"/>
    </reaction>
    <physiologicalReaction direction="left-to-right" evidence="3">
        <dbReference type="Rhea" id="RHEA:82180"/>
    </physiologicalReaction>
</comment>
<comment type="biophysicochemical properties">
    <kinetics>
        <KM evidence="3">206.5 uM for UDP-glucose</KM>
        <KM evidence="3">129.7 uM for bininalkenylresorcylic acid</KM>
    </kinetics>
    <phDependence>
        <text evidence="3">Optimum pH is 8.0.</text>
    </phDependence>
    <temperatureDependence>
        <text evidence="3">Optimum temperature is 30 degrees Celsius.</text>
    </temperatureDependence>
</comment>
<comment type="pathway">
    <text evidence="3">Mycotoxin biosynthesis.</text>
</comment>
<comment type="subcellular location">
    <subcellularLocation>
        <location evidence="1">Membrane</location>
        <topology evidence="1">Single-pass membrane protein</topology>
    </subcellularLocation>
</comment>
<comment type="domain">
    <text evidence="3">The transmembrane domain of is critical for its catalytic function.</text>
</comment>
<comment type="disruption phenotype">
    <text evidence="3">Completely abolishes the production of stromemycin but leads to the accumulation of the aglycone of stromemycin, named bininalkenylresorcylic acid.</text>
</comment>
<comment type="biotechnology">
    <text evidence="3">Stromemycin was found to show antibacterial activity against methicillin-resistant Staphylococcus aureus (MRSA) as well as significant protein tyrosine phosphatase 1B (PTP1B) inhibitory activity. Moreover, related O-glycosides show also significant anti-HIV activity or alpha-glucosidase inhibitory activity, as well as moderate cytotoxic activity against cancer cells and thus are promising candidates for drug discovery projects.</text>
</comment>
<comment type="similarity">
    <text evidence="5">Belongs to the glycosyltransferase 28 family.</text>
</comment>
<dbReference type="EC" id="2.4.1.-" evidence="3"/>
<dbReference type="EMBL" id="JOMC01000008">
    <property type="protein sequence ID" value="KIA76014.1"/>
    <property type="molecule type" value="Genomic_DNA"/>
</dbReference>
<dbReference type="SMR" id="A0A0C1EH92"/>
<dbReference type="Proteomes" id="UP000053475">
    <property type="component" value="Unassembled WGS sequence"/>
</dbReference>
<dbReference type="GO" id="GO:0016020">
    <property type="term" value="C:membrane"/>
    <property type="evidence" value="ECO:0007669"/>
    <property type="project" value="UniProtKB-SubCell"/>
</dbReference>
<dbReference type="GO" id="GO:0008194">
    <property type="term" value="F:UDP-glycosyltransferase activity"/>
    <property type="evidence" value="ECO:0007669"/>
    <property type="project" value="InterPro"/>
</dbReference>
<dbReference type="CDD" id="cd03784">
    <property type="entry name" value="GT1_Gtf-like"/>
    <property type="match status" value="1"/>
</dbReference>
<dbReference type="Gene3D" id="3.40.50.2000">
    <property type="entry name" value="Glycogen Phosphorylase B"/>
    <property type="match status" value="2"/>
</dbReference>
<dbReference type="InterPro" id="IPR050271">
    <property type="entry name" value="UDP-glycosyltransferase"/>
</dbReference>
<dbReference type="InterPro" id="IPR002213">
    <property type="entry name" value="UDP_glucos_trans"/>
</dbReference>
<dbReference type="InterPro" id="IPR035595">
    <property type="entry name" value="UDP_glycos_trans_CS"/>
</dbReference>
<dbReference type="PANTHER" id="PTHR48043">
    <property type="entry name" value="EG:EG0003.4 PROTEIN-RELATED"/>
    <property type="match status" value="1"/>
</dbReference>
<dbReference type="PANTHER" id="PTHR48043:SF145">
    <property type="entry name" value="FI06409P-RELATED"/>
    <property type="match status" value="1"/>
</dbReference>
<dbReference type="Pfam" id="PF00201">
    <property type="entry name" value="UDPGT"/>
    <property type="match status" value="1"/>
</dbReference>
<dbReference type="SUPFAM" id="SSF53756">
    <property type="entry name" value="UDP-Glycosyltransferase/glycogen phosphorylase"/>
    <property type="match status" value="1"/>
</dbReference>
<dbReference type="PROSITE" id="PS00375">
    <property type="entry name" value="UDPGT"/>
    <property type="match status" value="1"/>
</dbReference>
<sequence length="535" mass="60270">MTILSAERAPSRKILAVVTVGRYTCAAPILEICRILHTRGHTIEFACLDGHQRLATPHAFVSKIHVVGRNMSVEEDKSLYRLFDESDASTAQGRKGTFRALQFFHSWWPETYRNLKALVSNPEHRPDFILADLLADACIDIMNEFHIPLAVHYPQMPIQMAPQKYIPGMPGAQLKHLSSEHASLWERLMEEYHVLQLLFAMKDYIFFQRNMRREAGLGPRPPPRKPDYLVLVNSFFGLEVPKDLPPLMIPIGPVMADSFPLMEPSSGLVEFLESRKQVIYVAFGSHVELPGWRVRRLIDGLDQALAAGDIDGVIWAWKNPMPILEDSETSTTTDGISDSKTDYNAVLRNQDERIRIMHWAPQRAILAHPSTCLYLSHCGASSTMEAVYHGVPVVAMPIYGDQLANGKRLEAAGVGINMNRNNFTAEGLAQNIGRIVRDDDGLFARNVLRLQRIATANSRRKHVAADRIEEVMYDSELRFGDGSKQGVELRPTHLQTPDSRMSWVRASNLDLYIVCIAFVAVPVGVARWLSKVWFA</sequence>
<gene>
    <name evidence="4" type="primary">stmC</name>
    <name type="ORF">HK57_00631</name>
</gene>
<protein>
    <recommendedName>
        <fullName evidence="4">UDP-glycosyltransferase stmC</fullName>
        <ecNumber evidence="3">2.4.1.-</ecNumber>
    </recommendedName>
    <alternativeName>
        <fullName evidence="4">3-C-glucosyltransferase</fullName>
        <shortName evidence="4">CGT</shortName>
    </alternativeName>
    <alternativeName>
        <fullName evidence="4">Stromemycin biosynthesis cluster protein C</fullName>
    </alternativeName>
</protein>
<evidence type="ECO:0000255" key="1"/>
<evidence type="ECO:0000255" key="2">
    <source>
        <dbReference type="PROSITE-ProRule" id="PRU00498"/>
    </source>
</evidence>
<evidence type="ECO:0000269" key="3">
    <source>
    </source>
</evidence>
<evidence type="ECO:0000303" key="4">
    <source>
    </source>
</evidence>
<evidence type="ECO:0000305" key="5"/>
<reference key="1">
    <citation type="submission" date="2014-11" db="EMBL/GenBank/DDBJ databases">
        <title>Genomics derived discovery of secondary metabolites biosynthetic gene clusters in Aspergillus ustus.</title>
        <authorList>
            <person name="Pi B."/>
            <person name="Dai F."/>
            <person name="Song X."/>
            <person name="Zhu C."/>
            <person name="Li H."/>
            <person name="Yu D."/>
        </authorList>
    </citation>
    <scope>NUCLEOTIDE SEQUENCE [LARGE SCALE GENOMIC DNA]</scope>
    <source>
        <strain>3.3904</strain>
    </source>
</reference>
<reference key="2">
    <citation type="journal article" date="2024" name="J. Am. Chem. Soc.">
        <title>Targeted discovery of glycosylated natural products by tailoring enzyme-guided genome mining and MS-based metabolome analysis.</title>
        <authorList>
            <person name="Chen D."/>
            <person name="Song Z."/>
            <person name="Han J."/>
            <person name="Liu J."/>
            <person name="Liu H."/>
            <person name="Dai J."/>
        </authorList>
    </citation>
    <scope>FUNCTION</scope>
    <scope>DISRUPTION PHENOTYPE</scope>
    <scope>CATALYTIC ACTIVITY</scope>
    <scope>BIOPHYSICOCHEMICAL PROPERTIES</scope>
    <scope>SUBSTRATE SPECIFICITY</scope>
    <scope>DOMAIN</scope>
    <scope>PATHWAY</scope>
    <scope>BIOTECHNOLOGY</scope>
    <scope>MUTAGENESIS OF PHE-83; PHE-104; PRO-154; ILE-158 AND GLY-400</scope>
</reference>
<accession>A0A0C1EH92</accession>
<organism>
    <name type="scientific">Aspergillus ustus</name>
    <dbReference type="NCBI Taxonomy" id="40382"/>
    <lineage>
        <taxon>Eukaryota</taxon>
        <taxon>Fungi</taxon>
        <taxon>Dikarya</taxon>
        <taxon>Ascomycota</taxon>
        <taxon>Pezizomycotina</taxon>
        <taxon>Eurotiomycetes</taxon>
        <taxon>Eurotiomycetidae</taxon>
        <taxon>Eurotiales</taxon>
        <taxon>Aspergillaceae</taxon>
        <taxon>Aspergillus</taxon>
        <taxon>Aspergillus subgen. Nidulantes</taxon>
    </lineage>
</organism>
<proteinExistence type="evidence at protein level"/>
<keyword id="KW-0325">Glycoprotein</keyword>
<keyword id="KW-0328">Glycosyltransferase</keyword>
<keyword id="KW-0472">Membrane</keyword>
<keyword id="KW-1185">Reference proteome</keyword>
<keyword id="KW-0808">Transferase</keyword>
<keyword id="KW-0812">Transmembrane</keyword>
<keyword id="KW-1133">Transmembrane helix</keyword>
<feature type="chain" id="PRO_0000461503" description="UDP-glycosyltransferase stmC">
    <location>
        <begin position="1"/>
        <end position="535"/>
    </location>
</feature>
<feature type="transmembrane region" description="Helical" evidence="1">
    <location>
        <begin position="506"/>
        <end position="526"/>
    </location>
</feature>
<feature type="glycosylation site" description="N-linked (GlcNAc...) asparagine" evidence="2">
    <location>
        <position position="70"/>
    </location>
</feature>
<feature type="glycosylation site" description="N-linked (GlcNAc...) asparagine" evidence="2">
    <location>
        <position position="422"/>
    </location>
</feature>
<feature type="mutagenesis site" description="Does not affect the catalytic activity and does not lead to the ability to perform O-glycosylation." evidence="3">
    <original>F</original>
    <variation>L</variation>
    <location>
        <position position="83"/>
    </location>
</feature>
<feature type="mutagenesis site" description="Does not affect the catalytic activity and does not lead to the ability to perform O-glycosylation." evidence="3">
    <original>F</original>
    <variation>M</variation>
    <location>
        <position position="104"/>
    </location>
</feature>
<feature type="mutagenesis site" description="Reduces the catalytic activity and does not lead to the ability to perform O-glycosylation." evidence="3">
    <original>P</original>
    <variation>G</variation>
    <location>
        <position position="154"/>
    </location>
</feature>
<feature type="mutagenesis site" description="Reduces the catalytic activity and does not lead to the ability to perform O-glycosylation." evidence="3">
    <original>I</original>
    <variation>F</variation>
    <location>
        <position position="158"/>
    </location>
</feature>
<feature type="mutagenesis site" description="Strongly reduces the catalytic activity and does not lead to the ability to perform O-glycosylation." evidence="3">
    <original>G</original>
    <variation>N</variation>
    <location>
        <position position="400"/>
    </location>
</feature>